<accession>A8MYZ5</accession>
<protein>
    <recommendedName>
        <fullName>IQ domain-containing protein F6</fullName>
    </recommendedName>
</protein>
<organism>
    <name type="scientific">Homo sapiens</name>
    <name type="common">Human</name>
    <dbReference type="NCBI Taxonomy" id="9606"/>
    <lineage>
        <taxon>Eukaryota</taxon>
        <taxon>Metazoa</taxon>
        <taxon>Chordata</taxon>
        <taxon>Craniata</taxon>
        <taxon>Vertebrata</taxon>
        <taxon>Euteleostomi</taxon>
        <taxon>Mammalia</taxon>
        <taxon>Eutheria</taxon>
        <taxon>Euarchontoglires</taxon>
        <taxon>Primates</taxon>
        <taxon>Haplorrhini</taxon>
        <taxon>Catarrhini</taxon>
        <taxon>Hominidae</taxon>
        <taxon>Homo</taxon>
    </lineage>
</organism>
<evidence type="ECO:0000255" key="1">
    <source>
        <dbReference type="PROSITE-ProRule" id="PRU00116"/>
    </source>
</evidence>
<dbReference type="EMBL" id="AC099050">
    <property type="status" value="NOT_ANNOTATED_CDS"/>
    <property type="molecule type" value="Genomic_DNA"/>
</dbReference>
<dbReference type="CCDS" id="CCDS54590.1"/>
<dbReference type="RefSeq" id="NP_001137305.2">
    <property type="nucleotide sequence ID" value="NM_001143833.4"/>
</dbReference>
<dbReference type="RefSeq" id="XP_011532030.1">
    <property type="nucleotide sequence ID" value="XM_011533728.1"/>
</dbReference>
<dbReference type="SMR" id="A8MYZ5"/>
<dbReference type="FunCoup" id="A8MYZ5">
    <property type="interactions" value="1"/>
</dbReference>
<dbReference type="STRING" id="9606.ENSP00000381760"/>
<dbReference type="GlyGen" id="A8MYZ5">
    <property type="glycosylation" value="1 site, 1 O-linked glycan (1 site)"/>
</dbReference>
<dbReference type="iPTMnet" id="A8MYZ5"/>
<dbReference type="PhosphoSitePlus" id="A8MYZ5"/>
<dbReference type="BioMuta" id="IQCF6"/>
<dbReference type="MassIVE" id="A8MYZ5"/>
<dbReference type="PaxDb" id="9606-ENSP00000381760"/>
<dbReference type="PeptideAtlas" id="A8MYZ5"/>
<dbReference type="ProteomicsDB" id="2439"/>
<dbReference type="Antibodypedia" id="71165">
    <property type="antibodies" value="22 antibodies from 9 providers"/>
</dbReference>
<dbReference type="DNASU" id="440956"/>
<dbReference type="Ensembl" id="ENST00000398780.5">
    <property type="protein sequence ID" value="ENSP00000381760.3"/>
    <property type="gene ID" value="ENSG00000214686.7"/>
</dbReference>
<dbReference type="GeneID" id="440956"/>
<dbReference type="KEGG" id="hsa:440956"/>
<dbReference type="UCSC" id="uc021wyv.1">
    <property type="organism name" value="human"/>
</dbReference>
<dbReference type="AGR" id="HGNC:35158"/>
<dbReference type="CTD" id="440956"/>
<dbReference type="DisGeNET" id="440956"/>
<dbReference type="GeneCards" id="IQCF6"/>
<dbReference type="HGNC" id="HGNC:35158">
    <property type="gene designation" value="IQCF6"/>
</dbReference>
<dbReference type="HPA" id="ENSG00000214686">
    <property type="expression patterns" value="Tissue enriched (testis)"/>
</dbReference>
<dbReference type="neXtProt" id="NX_A8MYZ5"/>
<dbReference type="OpenTargets" id="ENSG00000214686"/>
<dbReference type="VEuPathDB" id="HostDB:ENSG00000214686"/>
<dbReference type="eggNOG" id="ENOG502TCZB">
    <property type="taxonomic scope" value="Eukaryota"/>
</dbReference>
<dbReference type="GeneTree" id="ENSGT00390000004641"/>
<dbReference type="HOGENOM" id="CLU_114989_1_0_1"/>
<dbReference type="InParanoid" id="A8MYZ5"/>
<dbReference type="OrthoDB" id="2148418at2759"/>
<dbReference type="PAN-GO" id="A8MYZ5">
    <property type="GO annotations" value="1 GO annotation based on evolutionary models"/>
</dbReference>
<dbReference type="PhylomeDB" id="A8MYZ5"/>
<dbReference type="TreeFam" id="TF337908"/>
<dbReference type="PathwayCommons" id="A8MYZ5"/>
<dbReference type="SignaLink" id="A8MYZ5"/>
<dbReference type="BioGRID-ORCS" id="440956">
    <property type="hits" value="9 hits in 1071 CRISPR screens"/>
</dbReference>
<dbReference type="GenomeRNAi" id="440956"/>
<dbReference type="Pharos" id="A8MYZ5">
    <property type="development level" value="Tdark"/>
</dbReference>
<dbReference type="PRO" id="PR:A8MYZ5"/>
<dbReference type="Proteomes" id="UP000005640">
    <property type="component" value="Chromosome 3"/>
</dbReference>
<dbReference type="RNAct" id="A8MYZ5">
    <property type="molecule type" value="protein"/>
</dbReference>
<dbReference type="Bgee" id="ENSG00000214686">
    <property type="expression patterns" value="Expressed in male germ line stem cell (sensu Vertebrata) in testis and 36 other cell types or tissues"/>
</dbReference>
<dbReference type="ExpressionAtlas" id="A8MYZ5">
    <property type="expression patterns" value="baseline and differential"/>
</dbReference>
<dbReference type="GO" id="GO:0005516">
    <property type="term" value="F:calmodulin binding"/>
    <property type="evidence" value="ECO:0000318"/>
    <property type="project" value="GO_Central"/>
</dbReference>
<dbReference type="FunFam" id="1.20.5.190:FF:000042">
    <property type="entry name" value="IQ motif containing F6"/>
    <property type="match status" value="1"/>
</dbReference>
<dbReference type="Gene3D" id="1.20.5.190">
    <property type="match status" value="1"/>
</dbReference>
<dbReference type="InterPro" id="IPR000048">
    <property type="entry name" value="IQ_motif_EF-hand-BS"/>
</dbReference>
<dbReference type="InterPro" id="IPR039887">
    <property type="entry name" value="IQCF"/>
</dbReference>
<dbReference type="PANTHER" id="PTHR21633:SF15">
    <property type="entry name" value="IQ DOMAIN-CONTAINING PROTEIN F6"/>
    <property type="match status" value="1"/>
</dbReference>
<dbReference type="PANTHER" id="PTHR21633">
    <property type="entry name" value="IQ MOTIF CONTAINING F"/>
    <property type="match status" value="1"/>
</dbReference>
<dbReference type="Pfam" id="PF00612">
    <property type="entry name" value="IQ"/>
    <property type="match status" value="2"/>
</dbReference>
<dbReference type="PROSITE" id="PS50096">
    <property type="entry name" value="IQ"/>
    <property type="match status" value="1"/>
</dbReference>
<keyword id="KW-1267">Proteomics identification</keyword>
<keyword id="KW-1185">Reference proteome</keyword>
<keyword id="KW-0677">Repeat</keyword>
<gene>
    <name type="primary">IQCF6</name>
</gene>
<name>IQCF6_HUMAN</name>
<proteinExistence type="evidence at protein level"/>
<reference key="1">
    <citation type="journal article" date="2006" name="Nature">
        <title>The DNA sequence, annotation and analysis of human chromosome 3.</title>
        <authorList>
            <person name="Muzny D.M."/>
            <person name="Scherer S.E."/>
            <person name="Kaul R."/>
            <person name="Wang J."/>
            <person name="Yu J."/>
            <person name="Sudbrak R."/>
            <person name="Buhay C.J."/>
            <person name="Chen R."/>
            <person name="Cree A."/>
            <person name="Ding Y."/>
            <person name="Dugan-Rocha S."/>
            <person name="Gill R."/>
            <person name="Gunaratne P."/>
            <person name="Harris R.A."/>
            <person name="Hawes A.C."/>
            <person name="Hernandez J."/>
            <person name="Hodgson A.V."/>
            <person name="Hume J."/>
            <person name="Jackson A."/>
            <person name="Khan Z.M."/>
            <person name="Kovar-Smith C."/>
            <person name="Lewis L.R."/>
            <person name="Lozado R.J."/>
            <person name="Metzker M.L."/>
            <person name="Milosavljevic A."/>
            <person name="Miner G.R."/>
            <person name="Morgan M.B."/>
            <person name="Nazareth L.V."/>
            <person name="Scott G."/>
            <person name="Sodergren E."/>
            <person name="Song X.-Z."/>
            <person name="Steffen D."/>
            <person name="Wei S."/>
            <person name="Wheeler D.A."/>
            <person name="Wright M.W."/>
            <person name="Worley K.C."/>
            <person name="Yuan Y."/>
            <person name="Zhang Z."/>
            <person name="Adams C.Q."/>
            <person name="Ansari-Lari M.A."/>
            <person name="Ayele M."/>
            <person name="Brown M.J."/>
            <person name="Chen G."/>
            <person name="Chen Z."/>
            <person name="Clendenning J."/>
            <person name="Clerc-Blankenburg K.P."/>
            <person name="Chen R."/>
            <person name="Chen Z."/>
            <person name="Davis C."/>
            <person name="Delgado O."/>
            <person name="Dinh H.H."/>
            <person name="Dong W."/>
            <person name="Draper H."/>
            <person name="Ernst S."/>
            <person name="Fu G."/>
            <person name="Gonzalez-Garay M.L."/>
            <person name="Garcia D.K."/>
            <person name="Gillett W."/>
            <person name="Gu J."/>
            <person name="Hao B."/>
            <person name="Haugen E."/>
            <person name="Havlak P."/>
            <person name="He X."/>
            <person name="Hennig S."/>
            <person name="Hu S."/>
            <person name="Huang W."/>
            <person name="Jackson L.R."/>
            <person name="Jacob L.S."/>
            <person name="Kelly S.H."/>
            <person name="Kube M."/>
            <person name="Levy R."/>
            <person name="Li Z."/>
            <person name="Liu B."/>
            <person name="Liu J."/>
            <person name="Liu W."/>
            <person name="Lu J."/>
            <person name="Maheshwari M."/>
            <person name="Nguyen B.-V."/>
            <person name="Okwuonu G.O."/>
            <person name="Palmeiri A."/>
            <person name="Pasternak S."/>
            <person name="Perez L.M."/>
            <person name="Phelps K.A."/>
            <person name="Plopper F.J."/>
            <person name="Qiang B."/>
            <person name="Raymond C."/>
            <person name="Rodriguez R."/>
            <person name="Saenphimmachak C."/>
            <person name="Santibanez J."/>
            <person name="Shen H."/>
            <person name="Shen Y."/>
            <person name="Subramanian S."/>
            <person name="Tabor P.E."/>
            <person name="Verduzco D."/>
            <person name="Waldron L."/>
            <person name="Wang J."/>
            <person name="Wang J."/>
            <person name="Wang Q."/>
            <person name="Williams G.A."/>
            <person name="Wong G.K.-S."/>
            <person name="Yao Z."/>
            <person name="Zhang J."/>
            <person name="Zhang X."/>
            <person name="Zhao G."/>
            <person name="Zhou J."/>
            <person name="Zhou Y."/>
            <person name="Nelson D."/>
            <person name="Lehrach H."/>
            <person name="Reinhardt R."/>
            <person name="Naylor S.L."/>
            <person name="Yang H."/>
            <person name="Olson M."/>
            <person name="Weinstock G."/>
            <person name="Gibbs R.A."/>
        </authorList>
    </citation>
    <scope>NUCLEOTIDE SEQUENCE [LARGE SCALE GENOMIC DNA]</scope>
</reference>
<feature type="chain" id="PRO_0000343226" description="IQ domain-containing protein F6">
    <location>
        <begin position="1"/>
        <end position="107"/>
    </location>
</feature>
<feature type="domain" description="IQ" evidence="1">
    <location>
        <begin position="42"/>
        <end position="71"/>
    </location>
</feature>
<sequence length="107" mass="13059">MVRRTLLQAALRAWVIQCWWRSMQAKMLEQRRRLALRLYTCQEWAVVKVQAQVRMWQARRRFLQARQAACIIQSHWRWHASQTRGLIRGHYEVRASRLELDIEILMT</sequence>